<organism>
    <name type="scientific">Vaccinia virus (strain Ankara)</name>
    <name type="common">VACV</name>
    <dbReference type="NCBI Taxonomy" id="126794"/>
    <lineage>
        <taxon>Viruses</taxon>
        <taxon>Varidnaviria</taxon>
        <taxon>Bamfordvirae</taxon>
        <taxon>Nucleocytoviricota</taxon>
        <taxon>Pokkesviricetes</taxon>
        <taxon>Chitovirales</taxon>
        <taxon>Poxviridae</taxon>
        <taxon>Chordopoxvirinae</taxon>
        <taxon>Orthopoxvirus</taxon>
        <taxon>Vaccinia virus</taxon>
    </lineage>
</organism>
<name>RIR2_VACCA</name>
<comment type="function">
    <text evidence="2">Ribonucleoside-diphosphate reductase holoenzyme provides the precursors necessary for viral DNA synthesis. Allows virus growth in non-dividing cells. Catalyzes the biosynthesis of deoxyribonucleotides from the corresponding ribonucleotides.</text>
</comment>
<comment type="catalytic activity">
    <reaction evidence="3">
        <text>a 2'-deoxyribonucleoside 5'-diphosphate + [thioredoxin]-disulfide + H2O = a ribonucleoside 5'-diphosphate + [thioredoxin]-dithiol</text>
        <dbReference type="Rhea" id="RHEA:23252"/>
        <dbReference type="Rhea" id="RHEA-COMP:10698"/>
        <dbReference type="Rhea" id="RHEA-COMP:10700"/>
        <dbReference type="ChEBI" id="CHEBI:15377"/>
        <dbReference type="ChEBI" id="CHEBI:29950"/>
        <dbReference type="ChEBI" id="CHEBI:50058"/>
        <dbReference type="ChEBI" id="CHEBI:57930"/>
        <dbReference type="ChEBI" id="CHEBI:73316"/>
        <dbReference type="EC" id="1.17.4.1"/>
    </reaction>
</comment>
<comment type="cofactor">
    <cofactor evidence="1">
        <name>Fe cation</name>
        <dbReference type="ChEBI" id="CHEBI:24875"/>
    </cofactor>
    <text evidence="1">Binds 2 iron ions per subunit.</text>
</comment>
<comment type="subunit">
    <text evidence="2">Interacts with RNR1/OPG080 subunit. Can interact with host RNR1 supunit.</text>
</comment>
<comment type="induction">
    <text>Expressed early in the viral replicative cycle.</text>
</comment>
<comment type="similarity">
    <text evidence="4">Belongs to the ribonucleoside diphosphate reductase small chain family.</text>
</comment>
<evidence type="ECO:0000250" key="1"/>
<evidence type="ECO:0000250" key="2">
    <source>
        <dbReference type="UniProtKB" id="P11158"/>
    </source>
</evidence>
<evidence type="ECO:0000255" key="3">
    <source>
        <dbReference type="PROSITE-ProRule" id="PRU10014"/>
    </source>
</evidence>
<evidence type="ECO:0000305" key="4"/>
<dbReference type="EC" id="1.17.4.1"/>
<dbReference type="EMBL" id="U94848">
    <property type="protein sequence ID" value="AAB96415.1"/>
    <property type="molecule type" value="Genomic_DNA"/>
</dbReference>
<dbReference type="EMBL" id="AY603355">
    <property type="protein sequence ID" value="AAT10430.1"/>
    <property type="molecule type" value="Genomic_DNA"/>
</dbReference>
<dbReference type="PIR" id="T30782">
    <property type="entry name" value="T30782"/>
</dbReference>
<dbReference type="SMR" id="O57175"/>
<dbReference type="Proteomes" id="UP000159908">
    <property type="component" value="Segment"/>
</dbReference>
<dbReference type="Proteomes" id="UP000172909">
    <property type="component" value="Segment"/>
</dbReference>
<dbReference type="GO" id="GO:0046872">
    <property type="term" value="F:metal ion binding"/>
    <property type="evidence" value="ECO:0007669"/>
    <property type="project" value="UniProtKB-KW"/>
</dbReference>
<dbReference type="GO" id="GO:0004748">
    <property type="term" value="F:ribonucleoside-diphosphate reductase activity, thioredoxin disulfide as acceptor"/>
    <property type="evidence" value="ECO:0007669"/>
    <property type="project" value="UniProtKB-EC"/>
</dbReference>
<dbReference type="GO" id="GO:0009263">
    <property type="term" value="P:deoxyribonucleotide biosynthetic process"/>
    <property type="evidence" value="ECO:0007669"/>
    <property type="project" value="UniProtKB-KW"/>
</dbReference>
<dbReference type="CDD" id="cd01049">
    <property type="entry name" value="RNRR2"/>
    <property type="match status" value="1"/>
</dbReference>
<dbReference type="FunFam" id="1.10.620.20:FF:000004">
    <property type="entry name" value="Ribonucleoside-diphosphate reductase subunit M2 B"/>
    <property type="match status" value="1"/>
</dbReference>
<dbReference type="Gene3D" id="1.10.620.20">
    <property type="entry name" value="Ribonucleotide Reductase, subunit A"/>
    <property type="match status" value="1"/>
</dbReference>
<dbReference type="InterPro" id="IPR009078">
    <property type="entry name" value="Ferritin-like_SF"/>
</dbReference>
<dbReference type="InterPro" id="IPR012348">
    <property type="entry name" value="RNR-like"/>
</dbReference>
<dbReference type="InterPro" id="IPR033909">
    <property type="entry name" value="RNR_small"/>
</dbReference>
<dbReference type="InterPro" id="IPR030475">
    <property type="entry name" value="RNR_small_AS"/>
</dbReference>
<dbReference type="InterPro" id="IPR000358">
    <property type="entry name" value="RNR_small_fam"/>
</dbReference>
<dbReference type="PANTHER" id="PTHR23409">
    <property type="entry name" value="RIBONUCLEOSIDE-DIPHOSPHATE REDUCTASE SMALL CHAIN"/>
    <property type="match status" value="1"/>
</dbReference>
<dbReference type="PANTHER" id="PTHR23409:SF18">
    <property type="entry name" value="RIBONUCLEOSIDE-DIPHOSPHATE REDUCTASE SUBUNIT M2"/>
    <property type="match status" value="1"/>
</dbReference>
<dbReference type="Pfam" id="PF00268">
    <property type="entry name" value="Ribonuc_red_sm"/>
    <property type="match status" value="1"/>
</dbReference>
<dbReference type="SUPFAM" id="SSF47240">
    <property type="entry name" value="Ferritin-like"/>
    <property type="match status" value="1"/>
</dbReference>
<dbReference type="PROSITE" id="PS00368">
    <property type="entry name" value="RIBORED_SMALL"/>
    <property type="match status" value="1"/>
</dbReference>
<gene>
    <name type="primary">OPG048</name>
    <name type="ordered locus">MVA032L</name>
    <name type="ordered locus">ACAM3000_MVA_032</name>
</gene>
<accession>O57175</accession>
<organismHost>
    <name type="scientific">Homo sapiens</name>
    <name type="common">Human</name>
    <dbReference type="NCBI Taxonomy" id="9606"/>
</organismHost>
<reference key="1">
    <citation type="journal article" date="1998" name="Virology">
        <title>The complete genomic sequence of the modified vaccinia Ankara strain: comparison with other orthopoxviruses.</title>
        <authorList>
            <person name="Antoine G."/>
            <person name="Scheiflinger F."/>
            <person name="Dorner F."/>
            <person name="Falkner F.G."/>
        </authorList>
    </citation>
    <scope>NUCLEOTIDE SEQUENCE [LARGE SCALE GENOMIC DNA]</scope>
</reference>
<reference key="2">
    <citation type="submission" date="2004-04" db="EMBL/GenBank/DDBJ databases">
        <authorList>
            <person name="Esposito J.J."/>
            <person name="Frace M."/>
            <person name="Sammons S.A."/>
            <person name="Olsen-Rasmussen M.S."/>
            <person name="Osborne J."/>
            <person name="Khristova M."/>
            <person name="Wohlhueter R.M."/>
        </authorList>
    </citation>
    <scope>NUCLEOTIDE SEQUENCE [LARGE SCALE GENOMIC DNA]</scope>
    <source>
        <strain>Isolate Acambis 3000</strain>
    </source>
</reference>
<sequence>MEPILAPNPNRFVIFPIQYHDIWNMYKKAEASFWTVEEVDISKDINDWNKLTPDEKYFIKHVLAFFAASDGIVNENLAERFCTEVQITEARCFYGFQMAIENIHSEMYSLLIDTYVKDSNEKNYLFNAIETMPCVKKKADWAQKWIHDSAGYGERLIAFAAVEGIFFSGSFASIFWLKKRGLMPGLTFSNELISRDEGLHCDFACLMFKHLLHPPSEETVRSIITDAVSIEQEFLTAALPVKLIGMNCEMMKTYIEFVADRLISELGFKKIYNVTNPFDFMENISLEGKTNFFEKRVGEYQKMGVMSQEDNHFSLDVDF</sequence>
<proteinExistence type="evidence at transcript level"/>
<feature type="chain" id="PRO_0000190495" description="Ribonucleoside-diphosphate reductase small chain">
    <location>
        <begin position="1"/>
        <end position="319"/>
    </location>
</feature>
<feature type="region of interest" description="Interaction with R1" evidence="2">
    <location>
        <begin position="313"/>
        <end position="319"/>
    </location>
</feature>
<feature type="active site" evidence="3">
    <location>
        <position position="108"/>
    </location>
</feature>
<feature type="binding site" evidence="3">
    <location>
        <position position="70"/>
    </location>
    <ligand>
        <name>Fe cation</name>
        <dbReference type="ChEBI" id="CHEBI:24875"/>
        <label>1</label>
    </ligand>
</feature>
<feature type="binding site" evidence="3">
    <location>
        <position position="101"/>
    </location>
    <ligand>
        <name>Fe cation</name>
        <dbReference type="ChEBI" id="CHEBI:24875"/>
        <label>1</label>
    </ligand>
</feature>
<feature type="binding site" evidence="1">
    <location>
        <position position="101"/>
    </location>
    <ligand>
        <name>Fe cation</name>
        <dbReference type="ChEBI" id="CHEBI:24875"/>
        <label>2</label>
    </ligand>
</feature>
<feature type="binding site" evidence="3">
    <location>
        <position position="104"/>
    </location>
    <ligand>
        <name>Fe cation</name>
        <dbReference type="ChEBI" id="CHEBI:24875"/>
        <label>1</label>
    </ligand>
</feature>
<feature type="binding site" evidence="1">
    <location>
        <position position="163"/>
    </location>
    <ligand>
        <name>Fe cation</name>
        <dbReference type="ChEBI" id="CHEBI:24875"/>
        <label>2</label>
    </ligand>
</feature>
<feature type="binding site" evidence="1">
    <location>
        <position position="197"/>
    </location>
    <ligand>
        <name>Fe cation</name>
        <dbReference type="ChEBI" id="CHEBI:24875"/>
        <label>2</label>
    </ligand>
</feature>
<feature type="binding site" evidence="1">
    <location>
        <position position="200"/>
    </location>
    <ligand>
        <name>Fe cation</name>
        <dbReference type="ChEBI" id="CHEBI:24875"/>
        <label>2</label>
    </ligand>
</feature>
<keyword id="KW-0215">Deoxyribonucleotide synthesis</keyword>
<keyword id="KW-0244">Early protein</keyword>
<keyword id="KW-0408">Iron</keyword>
<keyword id="KW-0479">Metal-binding</keyword>
<keyword id="KW-0560">Oxidoreductase</keyword>
<protein>
    <recommendedName>
        <fullName>Ribonucleoside-diphosphate reductase small chain</fullName>
        <ecNumber>1.17.4.1</ecNumber>
    </recommendedName>
    <alternativeName>
        <fullName>Ribonucleotide reductase small subunit</fullName>
    </alternativeName>
    <alternativeName>
        <fullName>Ribonucleotide reductase subunit 2</fullName>
        <shortName>RNR2</shortName>
    </alternativeName>
</protein>